<evidence type="ECO:0000255" key="1">
    <source>
        <dbReference type="HAMAP-Rule" id="MF_01621"/>
    </source>
</evidence>
<gene>
    <name evidence="1" type="primary">fadB</name>
    <name type="ordered locus">Pfl01_3879</name>
</gene>
<reference key="1">
    <citation type="journal article" date="2009" name="Genome Biol.">
        <title>Genomic and genetic analyses of diversity and plant interactions of Pseudomonas fluorescens.</title>
        <authorList>
            <person name="Silby M.W."/>
            <person name="Cerdeno-Tarraga A.M."/>
            <person name="Vernikos G.S."/>
            <person name="Giddens S.R."/>
            <person name="Jackson R.W."/>
            <person name="Preston G.M."/>
            <person name="Zhang X.-X."/>
            <person name="Moon C.D."/>
            <person name="Gehrig S.M."/>
            <person name="Godfrey S.A.C."/>
            <person name="Knight C.G."/>
            <person name="Malone J.G."/>
            <person name="Robinson Z."/>
            <person name="Spiers A.J."/>
            <person name="Harris S."/>
            <person name="Challis G.L."/>
            <person name="Yaxley A.M."/>
            <person name="Harris D."/>
            <person name="Seeger K."/>
            <person name="Murphy L."/>
            <person name="Rutter S."/>
            <person name="Squares R."/>
            <person name="Quail M.A."/>
            <person name="Saunders E."/>
            <person name="Mavromatis K."/>
            <person name="Brettin T.S."/>
            <person name="Bentley S.D."/>
            <person name="Hothersall J."/>
            <person name="Stephens E."/>
            <person name="Thomas C.M."/>
            <person name="Parkhill J."/>
            <person name="Levy S.B."/>
            <person name="Rainey P.B."/>
            <person name="Thomson N.R."/>
        </authorList>
    </citation>
    <scope>NUCLEOTIDE SEQUENCE [LARGE SCALE GENOMIC DNA]</scope>
    <source>
        <strain>Pf0-1</strain>
    </source>
</reference>
<comment type="function">
    <text evidence="1">Involved in the aerobic and anaerobic degradation of long-chain fatty acids via beta-oxidation cycle. Catalyzes the formation of 3-oxoacyl-CoA from enoyl-CoA via L-3-hydroxyacyl-CoA. It can also use D-3-hydroxyacyl-CoA and cis-3-enoyl-CoA as substrate.</text>
</comment>
<comment type="catalytic activity">
    <reaction evidence="1">
        <text>a (3S)-3-hydroxyacyl-CoA + NAD(+) = a 3-oxoacyl-CoA + NADH + H(+)</text>
        <dbReference type="Rhea" id="RHEA:22432"/>
        <dbReference type="ChEBI" id="CHEBI:15378"/>
        <dbReference type="ChEBI" id="CHEBI:57318"/>
        <dbReference type="ChEBI" id="CHEBI:57540"/>
        <dbReference type="ChEBI" id="CHEBI:57945"/>
        <dbReference type="ChEBI" id="CHEBI:90726"/>
        <dbReference type="EC" id="1.1.1.35"/>
    </reaction>
</comment>
<comment type="catalytic activity">
    <reaction evidence="1">
        <text>a (3S)-3-hydroxyacyl-CoA = a (2E)-enoyl-CoA + H2O</text>
        <dbReference type="Rhea" id="RHEA:16105"/>
        <dbReference type="ChEBI" id="CHEBI:15377"/>
        <dbReference type="ChEBI" id="CHEBI:57318"/>
        <dbReference type="ChEBI" id="CHEBI:58856"/>
        <dbReference type="EC" id="4.2.1.17"/>
    </reaction>
</comment>
<comment type="catalytic activity">
    <reaction evidence="1">
        <text>a 4-saturated-(3S)-3-hydroxyacyl-CoA = a (3E)-enoyl-CoA + H2O</text>
        <dbReference type="Rhea" id="RHEA:20724"/>
        <dbReference type="ChEBI" id="CHEBI:15377"/>
        <dbReference type="ChEBI" id="CHEBI:58521"/>
        <dbReference type="ChEBI" id="CHEBI:137480"/>
        <dbReference type="EC" id="4.2.1.17"/>
    </reaction>
</comment>
<comment type="catalytic activity">
    <reaction evidence="1">
        <text>(3S)-3-hydroxybutanoyl-CoA = (3R)-3-hydroxybutanoyl-CoA</text>
        <dbReference type="Rhea" id="RHEA:21760"/>
        <dbReference type="ChEBI" id="CHEBI:57315"/>
        <dbReference type="ChEBI" id="CHEBI:57316"/>
        <dbReference type="EC" id="5.1.2.3"/>
    </reaction>
</comment>
<comment type="catalytic activity">
    <reaction evidence="1">
        <text>a (3Z)-enoyl-CoA = a 4-saturated (2E)-enoyl-CoA</text>
        <dbReference type="Rhea" id="RHEA:45900"/>
        <dbReference type="ChEBI" id="CHEBI:85097"/>
        <dbReference type="ChEBI" id="CHEBI:85489"/>
        <dbReference type="EC" id="5.3.3.8"/>
    </reaction>
</comment>
<comment type="catalytic activity">
    <reaction evidence="1">
        <text>a (3E)-enoyl-CoA = a 4-saturated (2E)-enoyl-CoA</text>
        <dbReference type="Rhea" id="RHEA:45228"/>
        <dbReference type="ChEBI" id="CHEBI:58521"/>
        <dbReference type="ChEBI" id="CHEBI:85097"/>
        <dbReference type="EC" id="5.3.3.8"/>
    </reaction>
</comment>
<comment type="pathway">
    <text evidence="1">Lipid metabolism; fatty acid beta-oxidation.</text>
</comment>
<comment type="subunit">
    <text evidence="1">Heterotetramer of two alpha chains (FadB) and two beta chains (FadA).</text>
</comment>
<comment type="similarity">
    <text evidence="1">In the N-terminal section; belongs to the enoyl-CoA hydratase/isomerase family.</text>
</comment>
<comment type="similarity">
    <text evidence="1">In the C-terminal section; belongs to the 3-hydroxyacyl-CoA dehydrogenase family.</text>
</comment>
<name>FADB_PSEPF</name>
<organism>
    <name type="scientific">Pseudomonas fluorescens (strain Pf0-1)</name>
    <dbReference type="NCBI Taxonomy" id="205922"/>
    <lineage>
        <taxon>Bacteria</taxon>
        <taxon>Pseudomonadati</taxon>
        <taxon>Pseudomonadota</taxon>
        <taxon>Gammaproteobacteria</taxon>
        <taxon>Pseudomonadales</taxon>
        <taxon>Pseudomonadaceae</taxon>
        <taxon>Pseudomonas</taxon>
    </lineage>
</organism>
<proteinExistence type="inferred from homology"/>
<protein>
    <recommendedName>
        <fullName evidence="1">Fatty acid oxidation complex subunit alpha</fullName>
    </recommendedName>
    <domain>
        <recommendedName>
            <fullName evidence="1">Enoyl-CoA hydratase/Delta(3)-cis-Delta(2)-trans-enoyl-CoA isomerase/3-hydroxybutyryl-CoA epimerase</fullName>
            <ecNumber evidence="1">4.2.1.17</ecNumber>
            <ecNumber evidence="1">5.1.2.3</ecNumber>
            <ecNumber evidence="1">5.3.3.8</ecNumber>
        </recommendedName>
    </domain>
    <domain>
        <recommendedName>
            <fullName evidence="1">3-hydroxyacyl-CoA dehydrogenase</fullName>
            <ecNumber evidence="1">1.1.1.35</ecNumber>
        </recommendedName>
    </domain>
</protein>
<accession>Q3K9D8</accession>
<sequence length="715" mass="77389">MIYEGKAITVKALESGIVELKFDLKGESVNKFNRLTLNELRQAVDTIKADASIKGVIVSSGKDVFIVGADITEFVDNFKLPDAELVAGNLEANKIFSDFEDLNVPTVAAINGIALGGGLEMCLAADYRVMSTKAKIGLPEVKLGIYPGFGGTVRLPRLIGADNAIEWIAAGKENRPEDALKVGAVDAVVAPEKLQDAALELIKRAVSGEFDYKAKRQPKLEKLRLNAIEQMMAFETAKGFVAGQAGPNYPAPVEAIKTIQKAANFGRDKALEVEAAGFVKLAKTSAAQSLIGLFLNDQELKKKAKAYDEIAKDVKQAAVLGAGIMGGGIAYQSASKGTPILMKDINEHGIEQGLAEAAKLLVGRVDKGRMTAAKMAEVLNGIRPTLSYGDFGHVDLVVEAVVENPKVKQAVLAEVEDKVKEDTILASNTSTISISLLAKALKRPENFVGMHFFNPVHMMPLVEVIRGEKSSELAIATTVAYAKKMGKNPIVVNDCPGFLVNRVLFPYFGGFAKLVSAGVDFVRIDKIMEKFGWPMGPAYLMDVVGIDTGHHGRDVMAEGFPDRMKDDRRSAIDVLYEAKRLGQKNGKGFYAYEADKKGKQKKVADPSVLEVLKPIVYEQREVTDEDIINWMMIPLCLETVRCLEDGIVETAAEADMGLVYGIGFPPFRGGALRYIDSIGVAEFVALADQYADLGALYHPTAKLREMAKNGQSFFG</sequence>
<dbReference type="EC" id="4.2.1.17" evidence="1"/>
<dbReference type="EC" id="5.1.2.3" evidence="1"/>
<dbReference type="EC" id="5.3.3.8" evidence="1"/>
<dbReference type="EC" id="1.1.1.35" evidence="1"/>
<dbReference type="EMBL" id="CP000094">
    <property type="protein sequence ID" value="ABA75616.1"/>
    <property type="molecule type" value="Genomic_DNA"/>
</dbReference>
<dbReference type="RefSeq" id="WP_011335195.1">
    <property type="nucleotide sequence ID" value="NC_007492.2"/>
</dbReference>
<dbReference type="SMR" id="Q3K9D8"/>
<dbReference type="KEGG" id="pfo:Pfl01_3879"/>
<dbReference type="eggNOG" id="COG1024">
    <property type="taxonomic scope" value="Bacteria"/>
</dbReference>
<dbReference type="eggNOG" id="COG1250">
    <property type="taxonomic scope" value="Bacteria"/>
</dbReference>
<dbReference type="HOGENOM" id="CLU_009834_16_3_6"/>
<dbReference type="UniPathway" id="UPA00659"/>
<dbReference type="Proteomes" id="UP000002704">
    <property type="component" value="Chromosome"/>
</dbReference>
<dbReference type="GO" id="GO:0036125">
    <property type="term" value="C:fatty acid beta-oxidation multienzyme complex"/>
    <property type="evidence" value="ECO:0007669"/>
    <property type="project" value="InterPro"/>
</dbReference>
<dbReference type="GO" id="GO:0008692">
    <property type="term" value="F:3-hydroxybutyryl-CoA epimerase activity"/>
    <property type="evidence" value="ECO:0007669"/>
    <property type="project" value="UniProtKB-UniRule"/>
</dbReference>
<dbReference type="GO" id="GO:0004165">
    <property type="term" value="F:delta(3)-delta(2)-enoyl-CoA isomerase activity"/>
    <property type="evidence" value="ECO:0007669"/>
    <property type="project" value="UniProtKB-UniRule"/>
</dbReference>
<dbReference type="GO" id="GO:0004300">
    <property type="term" value="F:enoyl-CoA hydratase activity"/>
    <property type="evidence" value="ECO:0007669"/>
    <property type="project" value="UniProtKB-UniRule"/>
</dbReference>
<dbReference type="GO" id="GO:0016509">
    <property type="term" value="F:long-chain-3-hydroxyacyl-CoA dehydrogenase activity"/>
    <property type="evidence" value="ECO:0007669"/>
    <property type="project" value="TreeGrafter"/>
</dbReference>
<dbReference type="GO" id="GO:0070403">
    <property type="term" value="F:NAD+ binding"/>
    <property type="evidence" value="ECO:0007669"/>
    <property type="project" value="InterPro"/>
</dbReference>
<dbReference type="GO" id="GO:0006635">
    <property type="term" value="P:fatty acid beta-oxidation"/>
    <property type="evidence" value="ECO:0007669"/>
    <property type="project" value="UniProtKB-UniRule"/>
</dbReference>
<dbReference type="CDD" id="cd06558">
    <property type="entry name" value="crotonase-like"/>
    <property type="match status" value="1"/>
</dbReference>
<dbReference type="FunFam" id="1.10.1040.50:FF:000001">
    <property type="entry name" value="Fatty acid oxidation complex subunit alpha"/>
    <property type="match status" value="1"/>
</dbReference>
<dbReference type="FunFam" id="3.90.226.10:FF:000018">
    <property type="entry name" value="Fatty acid oxidation complex subunit alpha"/>
    <property type="match status" value="1"/>
</dbReference>
<dbReference type="FunFam" id="3.40.50.720:FF:000009">
    <property type="entry name" value="Fatty oxidation complex, alpha subunit"/>
    <property type="match status" value="1"/>
</dbReference>
<dbReference type="Gene3D" id="1.10.1040.50">
    <property type="match status" value="1"/>
</dbReference>
<dbReference type="Gene3D" id="3.90.226.10">
    <property type="entry name" value="2-enoyl-CoA Hydratase, Chain A, domain 1"/>
    <property type="match status" value="1"/>
</dbReference>
<dbReference type="Gene3D" id="3.40.50.720">
    <property type="entry name" value="NAD(P)-binding Rossmann-like Domain"/>
    <property type="match status" value="1"/>
</dbReference>
<dbReference type="HAMAP" id="MF_01621">
    <property type="entry name" value="FadB"/>
    <property type="match status" value="1"/>
</dbReference>
<dbReference type="InterPro" id="IPR006180">
    <property type="entry name" value="3-OHacyl-CoA_DH_CS"/>
</dbReference>
<dbReference type="InterPro" id="IPR006176">
    <property type="entry name" value="3-OHacyl-CoA_DH_NAD-bd"/>
</dbReference>
<dbReference type="InterPro" id="IPR006108">
    <property type="entry name" value="3HC_DH_C"/>
</dbReference>
<dbReference type="InterPro" id="IPR008927">
    <property type="entry name" value="6-PGluconate_DH-like_C_sf"/>
</dbReference>
<dbReference type="InterPro" id="IPR029045">
    <property type="entry name" value="ClpP/crotonase-like_dom_sf"/>
</dbReference>
<dbReference type="InterPro" id="IPR018376">
    <property type="entry name" value="Enoyl-CoA_hyd/isom_CS"/>
</dbReference>
<dbReference type="InterPro" id="IPR001753">
    <property type="entry name" value="Enoyl-CoA_hydra/iso"/>
</dbReference>
<dbReference type="InterPro" id="IPR050136">
    <property type="entry name" value="FA_oxidation_alpha_subunit"/>
</dbReference>
<dbReference type="InterPro" id="IPR012799">
    <property type="entry name" value="FadB"/>
</dbReference>
<dbReference type="InterPro" id="IPR036291">
    <property type="entry name" value="NAD(P)-bd_dom_sf"/>
</dbReference>
<dbReference type="NCBIfam" id="TIGR02437">
    <property type="entry name" value="FadB"/>
    <property type="match status" value="1"/>
</dbReference>
<dbReference type="NCBIfam" id="NF008727">
    <property type="entry name" value="PRK11730.1"/>
    <property type="match status" value="1"/>
</dbReference>
<dbReference type="PANTHER" id="PTHR43612">
    <property type="entry name" value="TRIFUNCTIONAL ENZYME SUBUNIT ALPHA"/>
    <property type="match status" value="1"/>
</dbReference>
<dbReference type="PANTHER" id="PTHR43612:SF3">
    <property type="entry name" value="TRIFUNCTIONAL ENZYME SUBUNIT ALPHA, MITOCHONDRIAL"/>
    <property type="match status" value="1"/>
</dbReference>
<dbReference type="Pfam" id="PF00725">
    <property type="entry name" value="3HCDH"/>
    <property type="match status" value="1"/>
</dbReference>
<dbReference type="Pfam" id="PF02737">
    <property type="entry name" value="3HCDH_N"/>
    <property type="match status" value="1"/>
</dbReference>
<dbReference type="Pfam" id="PF00378">
    <property type="entry name" value="ECH_1"/>
    <property type="match status" value="1"/>
</dbReference>
<dbReference type="SUPFAM" id="SSF48179">
    <property type="entry name" value="6-phosphogluconate dehydrogenase C-terminal domain-like"/>
    <property type="match status" value="2"/>
</dbReference>
<dbReference type="SUPFAM" id="SSF52096">
    <property type="entry name" value="ClpP/crotonase"/>
    <property type="match status" value="1"/>
</dbReference>
<dbReference type="SUPFAM" id="SSF51735">
    <property type="entry name" value="NAD(P)-binding Rossmann-fold domains"/>
    <property type="match status" value="1"/>
</dbReference>
<dbReference type="PROSITE" id="PS00067">
    <property type="entry name" value="3HCDH"/>
    <property type="match status" value="1"/>
</dbReference>
<dbReference type="PROSITE" id="PS00166">
    <property type="entry name" value="ENOYL_COA_HYDRATASE"/>
    <property type="match status" value="1"/>
</dbReference>
<keyword id="KW-0276">Fatty acid metabolism</keyword>
<keyword id="KW-0413">Isomerase</keyword>
<keyword id="KW-0442">Lipid degradation</keyword>
<keyword id="KW-0443">Lipid metabolism</keyword>
<keyword id="KW-0456">Lyase</keyword>
<keyword id="KW-0511">Multifunctional enzyme</keyword>
<keyword id="KW-0520">NAD</keyword>
<keyword id="KW-0560">Oxidoreductase</keyword>
<feature type="chain" id="PRO_0000255843" description="Fatty acid oxidation complex subunit alpha">
    <location>
        <begin position="1"/>
        <end position="715"/>
    </location>
</feature>
<feature type="region of interest" description="Enoyl-CoA hydratase/isomerase" evidence="1">
    <location>
        <begin position="1"/>
        <end position="190"/>
    </location>
</feature>
<feature type="region of interest" description="3-hydroxyacyl-CoA dehydrogenase" evidence="1">
    <location>
        <begin position="312"/>
        <end position="715"/>
    </location>
</feature>
<feature type="active site" description="For 3-hydroxyacyl-CoA dehydrogenase activity" evidence="1">
    <location>
        <position position="451"/>
    </location>
</feature>
<feature type="binding site" evidence="1">
    <location>
        <position position="297"/>
    </location>
    <ligand>
        <name>substrate</name>
    </ligand>
</feature>
<feature type="binding site" evidence="1">
    <location>
        <position position="325"/>
    </location>
    <ligand>
        <name>NAD(+)</name>
        <dbReference type="ChEBI" id="CHEBI:57540"/>
    </ligand>
</feature>
<feature type="binding site" evidence="1">
    <location>
        <position position="344"/>
    </location>
    <ligand>
        <name>NAD(+)</name>
        <dbReference type="ChEBI" id="CHEBI:57540"/>
    </ligand>
</feature>
<feature type="binding site" evidence="1">
    <location>
        <begin position="401"/>
        <end position="403"/>
    </location>
    <ligand>
        <name>NAD(+)</name>
        <dbReference type="ChEBI" id="CHEBI:57540"/>
    </ligand>
</feature>
<feature type="binding site" evidence="1">
    <location>
        <position position="408"/>
    </location>
    <ligand>
        <name>NAD(+)</name>
        <dbReference type="ChEBI" id="CHEBI:57540"/>
    </ligand>
</feature>
<feature type="binding site" evidence="1">
    <location>
        <position position="430"/>
    </location>
    <ligand>
        <name>NAD(+)</name>
        <dbReference type="ChEBI" id="CHEBI:57540"/>
    </ligand>
</feature>
<feature type="binding site" evidence="1">
    <location>
        <position position="454"/>
    </location>
    <ligand>
        <name>NAD(+)</name>
        <dbReference type="ChEBI" id="CHEBI:57540"/>
    </ligand>
</feature>
<feature type="binding site" evidence="1">
    <location>
        <position position="501"/>
    </location>
    <ligand>
        <name>substrate</name>
    </ligand>
</feature>
<feature type="binding site" evidence="1">
    <location>
        <position position="660"/>
    </location>
    <ligand>
        <name>substrate</name>
    </ligand>
</feature>
<feature type="site" description="Important for catalytic activity" evidence="1">
    <location>
        <position position="120"/>
    </location>
</feature>
<feature type="site" description="Important for catalytic activity" evidence="1">
    <location>
        <position position="140"/>
    </location>
</feature>